<proteinExistence type="inferred from homology"/>
<gene>
    <name evidence="1" type="primary">tig</name>
    <name type="ordered locus">Arth_2406</name>
</gene>
<reference key="1">
    <citation type="journal article" date="2013" name="Stand. Genomic Sci.">
        <title>Complete genome sequence of Arthrobacter sp. strain FB24.</title>
        <authorList>
            <person name="Nakatsu C.H."/>
            <person name="Barabote R."/>
            <person name="Thompson S."/>
            <person name="Bruce D."/>
            <person name="Detter C."/>
            <person name="Brettin T."/>
            <person name="Han C."/>
            <person name="Beasley F."/>
            <person name="Chen W."/>
            <person name="Konopka A."/>
            <person name="Xie G."/>
        </authorList>
    </citation>
    <scope>NUCLEOTIDE SEQUENCE [LARGE SCALE GENOMIC DNA]</scope>
    <source>
        <strain>FB24</strain>
    </source>
</reference>
<comment type="function">
    <text evidence="1">Involved in protein export. Acts as a chaperone by maintaining the newly synthesized protein in an open conformation. Functions as a peptidyl-prolyl cis-trans isomerase.</text>
</comment>
<comment type="catalytic activity">
    <reaction evidence="1">
        <text>[protein]-peptidylproline (omega=180) = [protein]-peptidylproline (omega=0)</text>
        <dbReference type="Rhea" id="RHEA:16237"/>
        <dbReference type="Rhea" id="RHEA-COMP:10747"/>
        <dbReference type="Rhea" id="RHEA-COMP:10748"/>
        <dbReference type="ChEBI" id="CHEBI:83833"/>
        <dbReference type="ChEBI" id="CHEBI:83834"/>
        <dbReference type="EC" id="5.2.1.8"/>
    </reaction>
</comment>
<comment type="subcellular location">
    <subcellularLocation>
        <location>Cytoplasm</location>
    </subcellularLocation>
    <text evidence="1">About half TF is bound to the ribosome near the polypeptide exit tunnel while the other half is free in the cytoplasm.</text>
</comment>
<comment type="domain">
    <text evidence="1">Consists of 3 domains; the N-terminus binds the ribosome, the middle domain has PPIase activity, while the C-terminus has intrinsic chaperone activity on its own.</text>
</comment>
<comment type="similarity">
    <text evidence="1">Belongs to the FKBP-type PPIase family. Tig subfamily.</text>
</comment>
<dbReference type="EC" id="5.2.1.8" evidence="1"/>
<dbReference type="EMBL" id="CP000454">
    <property type="protein sequence ID" value="ABK03785.1"/>
    <property type="molecule type" value="Genomic_DNA"/>
</dbReference>
<dbReference type="RefSeq" id="WP_011692248.1">
    <property type="nucleotide sequence ID" value="NC_008541.1"/>
</dbReference>
<dbReference type="SMR" id="A0JXL5"/>
<dbReference type="STRING" id="290399.Arth_2406"/>
<dbReference type="KEGG" id="art:Arth_2406"/>
<dbReference type="eggNOG" id="COG0544">
    <property type="taxonomic scope" value="Bacteria"/>
</dbReference>
<dbReference type="HOGENOM" id="CLU_033058_3_0_11"/>
<dbReference type="OrthoDB" id="9767721at2"/>
<dbReference type="Proteomes" id="UP000000754">
    <property type="component" value="Chromosome"/>
</dbReference>
<dbReference type="GO" id="GO:0005737">
    <property type="term" value="C:cytoplasm"/>
    <property type="evidence" value="ECO:0007669"/>
    <property type="project" value="UniProtKB-SubCell"/>
</dbReference>
<dbReference type="GO" id="GO:0003755">
    <property type="term" value="F:peptidyl-prolyl cis-trans isomerase activity"/>
    <property type="evidence" value="ECO:0007669"/>
    <property type="project" value="UniProtKB-UniRule"/>
</dbReference>
<dbReference type="GO" id="GO:0044183">
    <property type="term" value="F:protein folding chaperone"/>
    <property type="evidence" value="ECO:0007669"/>
    <property type="project" value="TreeGrafter"/>
</dbReference>
<dbReference type="GO" id="GO:0043022">
    <property type="term" value="F:ribosome binding"/>
    <property type="evidence" value="ECO:0007669"/>
    <property type="project" value="TreeGrafter"/>
</dbReference>
<dbReference type="GO" id="GO:0051083">
    <property type="term" value="P:'de novo' cotranslational protein folding"/>
    <property type="evidence" value="ECO:0007669"/>
    <property type="project" value="TreeGrafter"/>
</dbReference>
<dbReference type="GO" id="GO:0051301">
    <property type="term" value="P:cell division"/>
    <property type="evidence" value="ECO:0007669"/>
    <property type="project" value="UniProtKB-KW"/>
</dbReference>
<dbReference type="GO" id="GO:0061077">
    <property type="term" value="P:chaperone-mediated protein folding"/>
    <property type="evidence" value="ECO:0007669"/>
    <property type="project" value="TreeGrafter"/>
</dbReference>
<dbReference type="GO" id="GO:0015031">
    <property type="term" value="P:protein transport"/>
    <property type="evidence" value="ECO:0007669"/>
    <property type="project" value="UniProtKB-UniRule"/>
</dbReference>
<dbReference type="GO" id="GO:0043335">
    <property type="term" value="P:protein unfolding"/>
    <property type="evidence" value="ECO:0007669"/>
    <property type="project" value="TreeGrafter"/>
</dbReference>
<dbReference type="Gene3D" id="3.10.50.40">
    <property type="match status" value="1"/>
</dbReference>
<dbReference type="Gene3D" id="3.30.70.1050">
    <property type="entry name" value="Trigger factor ribosome-binding domain"/>
    <property type="match status" value="1"/>
</dbReference>
<dbReference type="Gene3D" id="1.10.3120.10">
    <property type="entry name" value="Trigger factor, C-terminal domain"/>
    <property type="match status" value="1"/>
</dbReference>
<dbReference type="HAMAP" id="MF_00303">
    <property type="entry name" value="Trigger_factor_Tig"/>
    <property type="match status" value="1"/>
</dbReference>
<dbReference type="InterPro" id="IPR046357">
    <property type="entry name" value="PPIase_dom_sf"/>
</dbReference>
<dbReference type="InterPro" id="IPR001179">
    <property type="entry name" value="PPIase_FKBP_dom"/>
</dbReference>
<dbReference type="InterPro" id="IPR005215">
    <property type="entry name" value="Trig_fac"/>
</dbReference>
<dbReference type="InterPro" id="IPR008880">
    <property type="entry name" value="Trigger_fac_C"/>
</dbReference>
<dbReference type="InterPro" id="IPR037041">
    <property type="entry name" value="Trigger_fac_C_sf"/>
</dbReference>
<dbReference type="InterPro" id="IPR008881">
    <property type="entry name" value="Trigger_fac_ribosome-bd_bac"/>
</dbReference>
<dbReference type="InterPro" id="IPR036611">
    <property type="entry name" value="Trigger_fac_ribosome-bd_sf"/>
</dbReference>
<dbReference type="InterPro" id="IPR027304">
    <property type="entry name" value="Trigger_fact/SurA_dom_sf"/>
</dbReference>
<dbReference type="NCBIfam" id="TIGR00115">
    <property type="entry name" value="tig"/>
    <property type="match status" value="1"/>
</dbReference>
<dbReference type="PANTHER" id="PTHR30560">
    <property type="entry name" value="TRIGGER FACTOR CHAPERONE AND PEPTIDYL-PROLYL CIS/TRANS ISOMERASE"/>
    <property type="match status" value="1"/>
</dbReference>
<dbReference type="PANTHER" id="PTHR30560:SF3">
    <property type="entry name" value="TRIGGER FACTOR-LIKE PROTEIN TIG, CHLOROPLASTIC"/>
    <property type="match status" value="1"/>
</dbReference>
<dbReference type="Pfam" id="PF00254">
    <property type="entry name" value="FKBP_C"/>
    <property type="match status" value="1"/>
</dbReference>
<dbReference type="Pfam" id="PF05698">
    <property type="entry name" value="Trigger_C"/>
    <property type="match status" value="1"/>
</dbReference>
<dbReference type="Pfam" id="PF05697">
    <property type="entry name" value="Trigger_N"/>
    <property type="match status" value="1"/>
</dbReference>
<dbReference type="PIRSF" id="PIRSF003095">
    <property type="entry name" value="Trigger_factor"/>
    <property type="match status" value="1"/>
</dbReference>
<dbReference type="SUPFAM" id="SSF54534">
    <property type="entry name" value="FKBP-like"/>
    <property type="match status" value="1"/>
</dbReference>
<dbReference type="SUPFAM" id="SSF109998">
    <property type="entry name" value="Triger factor/SurA peptide-binding domain-like"/>
    <property type="match status" value="1"/>
</dbReference>
<dbReference type="SUPFAM" id="SSF102735">
    <property type="entry name" value="Trigger factor ribosome-binding domain"/>
    <property type="match status" value="1"/>
</dbReference>
<name>TIG_ARTS2</name>
<keyword id="KW-0131">Cell cycle</keyword>
<keyword id="KW-0132">Cell division</keyword>
<keyword id="KW-0143">Chaperone</keyword>
<keyword id="KW-0963">Cytoplasm</keyword>
<keyword id="KW-0413">Isomerase</keyword>
<keyword id="KW-1185">Reference proteome</keyword>
<keyword id="KW-0697">Rotamase</keyword>
<protein>
    <recommendedName>
        <fullName evidence="1">Trigger factor</fullName>
        <shortName evidence="1">TF</shortName>
        <ecNumber evidence="1">5.2.1.8</ecNumber>
    </recommendedName>
    <alternativeName>
        <fullName evidence="1">PPIase</fullName>
    </alternativeName>
</protein>
<sequence length="469" mass="50483">MKSAVENLTPTRVKLNVEVPFEELKPSIDEAYKTVASQIQVPGFRKGKVPAKLIDQRVGRGYVLETAINEGLNGWYQEAVQETGIRPLSRPEVEITEVPDPTATDGELKFHAEVDVRPEIELPDYSGIKVEVAAAESSEADVDKALDELRGRFGTLKSVDRPAADGDFLTIDITASIDGAEVDSASGLSYQVGAGTMLEGLDEAVTGLSADEDAIFDTTLVGGDHAGEAAQVKVVVKSVKERELPEADDDFAQLASEFDTLAELREDLAKQAAESKVVEQGVEARDKVLDKLVELVEVPVPASVVEEQLEQHFKAENSHGDGEHDTEEHRAEVKANTERAFQNEIILDAIADKEEVGVSQNELIDYIVTTASQYGMDPNQFAQIIDQSGQVPMMVSEVRRRKALAVVLGQAEVTDSEGNKVDLSDFVRPGGEEEAAEAEAAPAVDSDAVEGEAATEEAAPSDDPAAVKF</sequence>
<accession>A0JXL5</accession>
<evidence type="ECO:0000255" key="1">
    <source>
        <dbReference type="HAMAP-Rule" id="MF_00303"/>
    </source>
</evidence>
<evidence type="ECO:0000256" key="2">
    <source>
        <dbReference type="SAM" id="MobiDB-lite"/>
    </source>
</evidence>
<feature type="chain" id="PRO_1000022643" description="Trigger factor">
    <location>
        <begin position="1"/>
        <end position="469"/>
    </location>
</feature>
<feature type="domain" description="PPIase FKBP-type" evidence="1">
    <location>
        <begin position="166"/>
        <end position="245"/>
    </location>
</feature>
<feature type="region of interest" description="Disordered" evidence="2">
    <location>
        <begin position="430"/>
        <end position="469"/>
    </location>
</feature>
<organism>
    <name type="scientific">Arthrobacter sp. (strain FB24)</name>
    <dbReference type="NCBI Taxonomy" id="290399"/>
    <lineage>
        <taxon>Bacteria</taxon>
        <taxon>Bacillati</taxon>
        <taxon>Actinomycetota</taxon>
        <taxon>Actinomycetes</taxon>
        <taxon>Micrococcales</taxon>
        <taxon>Micrococcaceae</taxon>
        <taxon>Arthrobacter</taxon>
    </lineage>
</organism>